<feature type="chain" id="PRO_0000100949" description="Threonine--tRNA ligase">
    <location>
        <begin position="1"/>
        <end position="658"/>
    </location>
</feature>
<feature type="domain" description="TGS" evidence="2">
    <location>
        <begin position="1"/>
        <end position="64"/>
    </location>
</feature>
<feature type="region of interest" description="Catalytic" evidence="1">
    <location>
        <begin position="246"/>
        <end position="548"/>
    </location>
</feature>
<feature type="binding site" evidence="1">
    <location>
        <position position="343"/>
    </location>
    <ligand>
        <name>Zn(2+)</name>
        <dbReference type="ChEBI" id="CHEBI:29105"/>
    </ligand>
</feature>
<feature type="binding site" evidence="1">
    <location>
        <position position="394"/>
    </location>
    <ligand>
        <name>Zn(2+)</name>
        <dbReference type="ChEBI" id="CHEBI:29105"/>
    </ligand>
</feature>
<feature type="binding site" evidence="1">
    <location>
        <position position="525"/>
    </location>
    <ligand>
        <name>Zn(2+)</name>
        <dbReference type="ChEBI" id="CHEBI:29105"/>
    </ligand>
</feature>
<protein>
    <recommendedName>
        <fullName evidence="1">Threonine--tRNA ligase</fullName>
        <ecNumber evidence="1">6.1.1.3</ecNumber>
    </recommendedName>
    <alternativeName>
        <fullName evidence="1">Threonyl-tRNA synthetase</fullName>
        <shortName evidence="1">ThrRS</shortName>
    </alternativeName>
</protein>
<name>SYT_BRUSU</name>
<sequence length="658" mass="74578">MSNTVSLQFPDGSVREYDASMTGAALAESISKSLAKKAVAYAVDGTVRDLSDPLGASGKVEIITREDPRALELIRHDTAHVLAEAVQELFPGTQVTIGPVIENGFYYDFARNEPFTLDDLPVIEKKMREIIQRNKPFTKEVWSREKAKQVFSDKGESYKVELVDAIPAGQDLKIYYQGDWFDLCRGPHMASTGQIGNSFKLMKVAGAYWRGDANNPMLTRIYGTAFANDNDLQAYLHMLEEAEKRDHRRLGREMDLFHFQEEGPGVVFWHAKGWKMFQNLVSYMRRRLDSHGYQEVNAPQVLDKSLWETSGHWGWYRDNMFKVTVAGDDTDDDRVFALKPMNCPGHVQIFKHGLKSYRDLPIKLAEFGNVHRYEPSGALHGLMRVRGFTQDDAHIFCTEEQMAAECLRINDLILSVYKDFGFEEITIKLSTRPEKRVGSDELWDRAESVMMTVLEQIRQQSNNIKTGILPGEGAFYGPKFEYTLKDAIGREWQCGTTQVDFNLPERFGAFYIGADSEKKQPVMIHRAICGSMERFLGILIENFAGHMPLWFAPVQVVVATITSDADEYAKEAAAKLKAAGLQVVTDLRNEKINYKVREHSLQKVPVILVCGKREAEEKTVNMRRLGSRDQESMTLDEAIARLCEEATPPDLLRLKNAG</sequence>
<dbReference type="EC" id="6.1.1.3" evidence="1"/>
<dbReference type="EMBL" id="AE014291">
    <property type="protein sequence ID" value="AAN29991.1"/>
    <property type="molecule type" value="Genomic_DNA"/>
</dbReference>
<dbReference type="EMBL" id="CP002997">
    <property type="protein sequence ID" value="AEM18409.1"/>
    <property type="molecule type" value="Genomic_DNA"/>
</dbReference>
<dbReference type="RefSeq" id="WP_004688376.1">
    <property type="nucleotide sequence ID" value="NZ_KN046804.1"/>
</dbReference>
<dbReference type="SMR" id="Q8G0L8"/>
<dbReference type="GeneID" id="55590759"/>
<dbReference type="KEGG" id="bms:BR1071"/>
<dbReference type="KEGG" id="bsi:BS1330_I1067"/>
<dbReference type="PATRIC" id="fig|204722.21.peg.815"/>
<dbReference type="HOGENOM" id="CLU_008554_0_1_5"/>
<dbReference type="Proteomes" id="UP000007104">
    <property type="component" value="Chromosome I"/>
</dbReference>
<dbReference type="GO" id="GO:0005829">
    <property type="term" value="C:cytosol"/>
    <property type="evidence" value="ECO:0007669"/>
    <property type="project" value="TreeGrafter"/>
</dbReference>
<dbReference type="GO" id="GO:0005524">
    <property type="term" value="F:ATP binding"/>
    <property type="evidence" value="ECO:0007669"/>
    <property type="project" value="UniProtKB-UniRule"/>
</dbReference>
<dbReference type="GO" id="GO:0046872">
    <property type="term" value="F:metal ion binding"/>
    <property type="evidence" value="ECO:0007669"/>
    <property type="project" value="UniProtKB-KW"/>
</dbReference>
<dbReference type="GO" id="GO:0004829">
    <property type="term" value="F:threonine-tRNA ligase activity"/>
    <property type="evidence" value="ECO:0007669"/>
    <property type="project" value="UniProtKB-UniRule"/>
</dbReference>
<dbReference type="GO" id="GO:0000049">
    <property type="term" value="F:tRNA binding"/>
    <property type="evidence" value="ECO:0007669"/>
    <property type="project" value="UniProtKB-KW"/>
</dbReference>
<dbReference type="GO" id="GO:0006435">
    <property type="term" value="P:threonyl-tRNA aminoacylation"/>
    <property type="evidence" value="ECO:0007669"/>
    <property type="project" value="UniProtKB-UniRule"/>
</dbReference>
<dbReference type="CDD" id="cd01667">
    <property type="entry name" value="TGS_ThrRS"/>
    <property type="match status" value="1"/>
</dbReference>
<dbReference type="CDD" id="cd00860">
    <property type="entry name" value="ThrRS_anticodon"/>
    <property type="match status" value="1"/>
</dbReference>
<dbReference type="CDD" id="cd00771">
    <property type="entry name" value="ThrRS_core"/>
    <property type="match status" value="1"/>
</dbReference>
<dbReference type="FunFam" id="3.30.54.20:FF:000002">
    <property type="entry name" value="Threonine--tRNA ligase"/>
    <property type="match status" value="1"/>
</dbReference>
<dbReference type="FunFam" id="3.30.930.10:FF:000002">
    <property type="entry name" value="Threonine--tRNA ligase"/>
    <property type="match status" value="1"/>
</dbReference>
<dbReference type="FunFam" id="3.40.50.800:FF:000001">
    <property type="entry name" value="Threonine--tRNA ligase"/>
    <property type="match status" value="1"/>
</dbReference>
<dbReference type="FunFam" id="3.30.980.10:FF:000005">
    <property type="entry name" value="Threonyl-tRNA synthetase, mitochondrial"/>
    <property type="match status" value="1"/>
</dbReference>
<dbReference type="Gene3D" id="3.10.20.30">
    <property type="match status" value="1"/>
</dbReference>
<dbReference type="Gene3D" id="3.30.54.20">
    <property type="match status" value="1"/>
</dbReference>
<dbReference type="Gene3D" id="3.40.50.800">
    <property type="entry name" value="Anticodon-binding domain"/>
    <property type="match status" value="1"/>
</dbReference>
<dbReference type="Gene3D" id="3.30.930.10">
    <property type="entry name" value="Bira Bifunctional Protein, Domain 2"/>
    <property type="match status" value="1"/>
</dbReference>
<dbReference type="Gene3D" id="3.30.980.10">
    <property type="entry name" value="Threonyl-trna Synthetase, Chain A, domain 2"/>
    <property type="match status" value="1"/>
</dbReference>
<dbReference type="HAMAP" id="MF_00184">
    <property type="entry name" value="Thr_tRNA_synth"/>
    <property type="match status" value="1"/>
</dbReference>
<dbReference type="InterPro" id="IPR002314">
    <property type="entry name" value="aa-tRNA-synt_IIb"/>
</dbReference>
<dbReference type="InterPro" id="IPR006195">
    <property type="entry name" value="aa-tRNA-synth_II"/>
</dbReference>
<dbReference type="InterPro" id="IPR045864">
    <property type="entry name" value="aa-tRNA-synth_II/BPL/LPL"/>
</dbReference>
<dbReference type="InterPro" id="IPR004154">
    <property type="entry name" value="Anticodon-bd"/>
</dbReference>
<dbReference type="InterPro" id="IPR036621">
    <property type="entry name" value="Anticodon-bd_dom_sf"/>
</dbReference>
<dbReference type="InterPro" id="IPR012675">
    <property type="entry name" value="Beta-grasp_dom_sf"/>
</dbReference>
<dbReference type="InterPro" id="IPR004095">
    <property type="entry name" value="TGS"/>
</dbReference>
<dbReference type="InterPro" id="IPR012676">
    <property type="entry name" value="TGS-like"/>
</dbReference>
<dbReference type="InterPro" id="IPR002320">
    <property type="entry name" value="Thr-tRNA-ligase_IIa"/>
</dbReference>
<dbReference type="InterPro" id="IPR018163">
    <property type="entry name" value="Thr/Ala-tRNA-synth_IIc_edit"/>
</dbReference>
<dbReference type="InterPro" id="IPR047246">
    <property type="entry name" value="ThrRS_anticodon"/>
</dbReference>
<dbReference type="InterPro" id="IPR033728">
    <property type="entry name" value="ThrRS_core"/>
</dbReference>
<dbReference type="InterPro" id="IPR012947">
    <property type="entry name" value="tRNA_SAD"/>
</dbReference>
<dbReference type="NCBIfam" id="TIGR00418">
    <property type="entry name" value="thrS"/>
    <property type="match status" value="1"/>
</dbReference>
<dbReference type="PANTHER" id="PTHR11451:SF44">
    <property type="entry name" value="THREONINE--TRNA LIGASE, CHLOROPLASTIC_MITOCHONDRIAL 2"/>
    <property type="match status" value="1"/>
</dbReference>
<dbReference type="PANTHER" id="PTHR11451">
    <property type="entry name" value="THREONINE-TRNA LIGASE"/>
    <property type="match status" value="1"/>
</dbReference>
<dbReference type="Pfam" id="PF03129">
    <property type="entry name" value="HGTP_anticodon"/>
    <property type="match status" value="1"/>
</dbReference>
<dbReference type="Pfam" id="PF02824">
    <property type="entry name" value="TGS"/>
    <property type="match status" value="1"/>
</dbReference>
<dbReference type="Pfam" id="PF00587">
    <property type="entry name" value="tRNA-synt_2b"/>
    <property type="match status" value="1"/>
</dbReference>
<dbReference type="Pfam" id="PF07973">
    <property type="entry name" value="tRNA_SAD"/>
    <property type="match status" value="1"/>
</dbReference>
<dbReference type="PRINTS" id="PR01047">
    <property type="entry name" value="TRNASYNTHTHR"/>
</dbReference>
<dbReference type="SMART" id="SM00863">
    <property type="entry name" value="tRNA_SAD"/>
    <property type="match status" value="1"/>
</dbReference>
<dbReference type="SUPFAM" id="SSF52954">
    <property type="entry name" value="Class II aaRS ABD-related"/>
    <property type="match status" value="1"/>
</dbReference>
<dbReference type="SUPFAM" id="SSF55681">
    <property type="entry name" value="Class II aaRS and biotin synthetases"/>
    <property type="match status" value="1"/>
</dbReference>
<dbReference type="SUPFAM" id="SSF81271">
    <property type="entry name" value="TGS-like"/>
    <property type="match status" value="1"/>
</dbReference>
<dbReference type="SUPFAM" id="SSF55186">
    <property type="entry name" value="ThrRS/AlaRS common domain"/>
    <property type="match status" value="1"/>
</dbReference>
<dbReference type="PROSITE" id="PS50862">
    <property type="entry name" value="AA_TRNA_LIGASE_II"/>
    <property type="match status" value="1"/>
</dbReference>
<dbReference type="PROSITE" id="PS51880">
    <property type="entry name" value="TGS"/>
    <property type="match status" value="1"/>
</dbReference>
<proteinExistence type="inferred from homology"/>
<reference key="1">
    <citation type="journal article" date="2002" name="Proc. Natl. Acad. Sci. U.S.A.">
        <title>The Brucella suis genome reveals fundamental similarities between animal and plant pathogens and symbionts.</title>
        <authorList>
            <person name="Paulsen I.T."/>
            <person name="Seshadri R."/>
            <person name="Nelson K.E."/>
            <person name="Eisen J.A."/>
            <person name="Heidelberg J.F."/>
            <person name="Read T.D."/>
            <person name="Dodson R.J."/>
            <person name="Umayam L.A."/>
            <person name="Brinkac L.M."/>
            <person name="Beanan M.J."/>
            <person name="Daugherty S.C."/>
            <person name="DeBoy R.T."/>
            <person name="Durkin A.S."/>
            <person name="Kolonay J.F."/>
            <person name="Madupu R."/>
            <person name="Nelson W.C."/>
            <person name="Ayodeji B."/>
            <person name="Kraul M."/>
            <person name="Shetty J."/>
            <person name="Malek J.A."/>
            <person name="Van Aken S.E."/>
            <person name="Riedmuller S."/>
            <person name="Tettelin H."/>
            <person name="Gill S.R."/>
            <person name="White O."/>
            <person name="Salzberg S.L."/>
            <person name="Hoover D.L."/>
            <person name="Lindler L.E."/>
            <person name="Halling S.M."/>
            <person name="Boyle S.M."/>
            <person name="Fraser C.M."/>
        </authorList>
    </citation>
    <scope>NUCLEOTIDE SEQUENCE [LARGE SCALE GENOMIC DNA]</scope>
    <source>
        <strain>1330</strain>
    </source>
</reference>
<reference key="2">
    <citation type="journal article" date="2011" name="J. Bacteriol.">
        <title>Revised genome sequence of Brucella suis 1330.</title>
        <authorList>
            <person name="Tae H."/>
            <person name="Shallom S."/>
            <person name="Settlage R."/>
            <person name="Preston D."/>
            <person name="Adams L.G."/>
            <person name="Garner H.R."/>
        </authorList>
    </citation>
    <scope>NUCLEOTIDE SEQUENCE [LARGE SCALE GENOMIC DNA]</scope>
    <source>
        <strain>1330</strain>
    </source>
</reference>
<gene>
    <name evidence="1" type="primary">thrS</name>
    <name type="ordered locus">BR1071</name>
    <name type="ordered locus">BS1330_I1067</name>
</gene>
<organism>
    <name type="scientific">Brucella suis biovar 1 (strain 1330)</name>
    <dbReference type="NCBI Taxonomy" id="204722"/>
    <lineage>
        <taxon>Bacteria</taxon>
        <taxon>Pseudomonadati</taxon>
        <taxon>Pseudomonadota</taxon>
        <taxon>Alphaproteobacteria</taxon>
        <taxon>Hyphomicrobiales</taxon>
        <taxon>Brucellaceae</taxon>
        <taxon>Brucella/Ochrobactrum group</taxon>
        <taxon>Brucella</taxon>
    </lineage>
</organism>
<accession>Q8G0L8</accession>
<accession>G0K9Z3</accession>
<keyword id="KW-0030">Aminoacyl-tRNA synthetase</keyword>
<keyword id="KW-0067">ATP-binding</keyword>
<keyword id="KW-0963">Cytoplasm</keyword>
<keyword id="KW-0436">Ligase</keyword>
<keyword id="KW-0479">Metal-binding</keyword>
<keyword id="KW-0547">Nucleotide-binding</keyword>
<keyword id="KW-0648">Protein biosynthesis</keyword>
<keyword id="KW-0694">RNA-binding</keyword>
<keyword id="KW-0820">tRNA-binding</keyword>
<keyword id="KW-0862">Zinc</keyword>
<comment type="function">
    <text evidence="1">Catalyzes the attachment of threonine to tRNA(Thr) in a two-step reaction: L-threonine is first activated by ATP to form Thr-AMP and then transferred to the acceptor end of tRNA(Thr). Also edits incorrectly charged L-seryl-tRNA(Thr).</text>
</comment>
<comment type="catalytic activity">
    <reaction evidence="1">
        <text>tRNA(Thr) + L-threonine + ATP = L-threonyl-tRNA(Thr) + AMP + diphosphate + H(+)</text>
        <dbReference type="Rhea" id="RHEA:24624"/>
        <dbReference type="Rhea" id="RHEA-COMP:9670"/>
        <dbReference type="Rhea" id="RHEA-COMP:9704"/>
        <dbReference type="ChEBI" id="CHEBI:15378"/>
        <dbReference type="ChEBI" id="CHEBI:30616"/>
        <dbReference type="ChEBI" id="CHEBI:33019"/>
        <dbReference type="ChEBI" id="CHEBI:57926"/>
        <dbReference type="ChEBI" id="CHEBI:78442"/>
        <dbReference type="ChEBI" id="CHEBI:78534"/>
        <dbReference type="ChEBI" id="CHEBI:456215"/>
        <dbReference type="EC" id="6.1.1.3"/>
    </reaction>
</comment>
<comment type="cofactor">
    <cofactor evidence="1">
        <name>Zn(2+)</name>
        <dbReference type="ChEBI" id="CHEBI:29105"/>
    </cofactor>
    <text evidence="1">Binds 1 zinc ion per subunit.</text>
</comment>
<comment type="subunit">
    <text evidence="1">Homodimer.</text>
</comment>
<comment type="subcellular location">
    <subcellularLocation>
        <location evidence="1">Cytoplasm</location>
    </subcellularLocation>
</comment>
<comment type="similarity">
    <text evidence="1">Belongs to the class-II aminoacyl-tRNA synthetase family.</text>
</comment>
<evidence type="ECO:0000255" key="1">
    <source>
        <dbReference type="HAMAP-Rule" id="MF_00184"/>
    </source>
</evidence>
<evidence type="ECO:0000255" key="2">
    <source>
        <dbReference type="PROSITE-ProRule" id="PRU01228"/>
    </source>
</evidence>